<gene>
    <name evidence="1" type="primary">rpmB</name>
    <name evidence="1" type="synonym">rpl28</name>
    <name type="ordered locus">PMT9312_0898</name>
</gene>
<proteinExistence type="inferred from homology"/>
<dbReference type="EMBL" id="CP000111">
    <property type="protein sequence ID" value="ABB49958.1"/>
    <property type="molecule type" value="Genomic_DNA"/>
</dbReference>
<dbReference type="RefSeq" id="WP_011376452.1">
    <property type="nucleotide sequence ID" value="NC_007577.1"/>
</dbReference>
<dbReference type="SMR" id="Q31AY7"/>
<dbReference type="STRING" id="74546.PMT9312_0898"/>
<dbReference type="KEGG" id="pmi:PMT9312_0898"/>
<dbReference type="eggNOG" id="COG0227">
    <property type="taxonomic scope" value="Bacteria"/>
</dbReference>
<dbReference type="HOGENOM" id="CLU_064548_3_0_3"/>
<dbReference type="OrthoDB" id="9805609at2"/>
<dbReference type="Proteomes" id="UP000002715">
    <property type="component" value="Chromosome"/>
</dbReference>
<dbReference type="GO" id="GO:1990904">
    <property type="term" value="C:ribonucleoprotein complex"/>
    <property type="evidence" value="ECO:0007669"/>
    <property type="project" value="UniProtKB-KW"/>
</dbReference>
<dbReference type="GO" id="GO:0005840">
    <property type="term" value="C:ribosome"/>
    <property type="evidence" value="ECO:0007669"/>
    <property type="project" value="UniProtKB-KW"/>
</dbReference>
<dbReference type="GO" id="GO:0003735">
    <property type="term" value="F:structural constituent of ribosome"/>
    <property type="evidence" value="ECO:0007669"/>
    <property type="project" value="InterPro"/>
</dbReference>
<dbReference type="GO" id="GO:0006412">
    <property type="term" value="P:translation"/>
    <property type="evidence" value="ECO:0007669"/>
    <property type="project" value="UniProtKB-UniRule"/>
</dbReference>
<dbReference type="Gene3D" id="2.30.170.40">
    <property type="entry name" value="Ribosomal protein L28/L24"/>
    <property type="match status" value="1"/>
</dbReference>
<dbReference type="HAMAP" id="MF_00373">
    <property type="entry name" value="Ribosomal_bL28"/>
    <property type="match status" value="1"/>
</dbReference>
<dbReference type="InterPro" id="IPR026569">
    <property type="entry name" value="Ribosomal_bL28"/>
</dbReference>
<dbReference type="InterPro" id="IPR034704">
    <property type="entry name" value="Ribosomal_bL28/bL31-like_sf"/>
</dbReference>
<dbReference type="InterPro" id="IPR001383">
    <property type="entry name" value="Ribosomal_bL28_bact-type"/>
</dbReference>
<dbReference type="InterPro" id="IPR037147">
    <property type="entry name" value="Ribosomal_bL28_sf"/>
</dbReference>
<dbReference type="NCBIfam" id="TIGR00009">
    <property type="entry name" value="L28"/>
    <property type="match status" value="1"/>
</dbReference>
<dbReference type="PANTHER" id="PTHR13528">
    <property type="entry name" value="39S RIBOSOMAL PROTEIN L28, MITOCHONDRIAL"/>
    <property type="match status" value="1"/>
</dbReference>
<dbReference type="PANTHER" id="PTHR13528:SF2">
    <property type="entry name" value="LARGE RIBOSOMAL SUBUNIT PROTEIN BL28M"/>
    <property type="match status" value="1"/>
</dbReference>
<dbReference type="Pfam" id="PF00830">
    <property type="entry name" value="Ribosomal_L28"/>
    <property type="match status" value="1"/>
</dbReference>
<dbReference type="SUPFAM" id="SSF143800">
    <property type="entry name" value="L28p-like"/>
    <property type="match status" value="1"/>
</dbReference>
<feature type="chain" id="PRO_1000007306" description="Large ribosomal subunit protein bL28">
    <location>
        <begin position="1"/>
        <end position="78"/>
    </location>
</feature>
<comment type="similarity">
    <text evidence="1">Belongs to the bacterial ribosomal protein bL28 family.</text>
</comment>
<keyword id="KW-0687">Ribonucleoprotein</keyword>
<keyword id="KW-0689">Ribosomal protein</keyword>
<sequence>MSRVCELTGAKANNGMAVSHSHIRTKKLQQVNLQKRRLWWEEGKKWVNIKISTKALKSVQKVGLDKFAKSNGVDLKKF</sequence>
<evidence type="ECO:0000255" key="1">
    <source>
        <dbReference type="HAMAP-Rule" id="MF_00373"/>
    </source>
</evidence>
<evidence type="ECO:0000305" key="2"/>
<reference key="1">
    <citation type="journal article" date="2006" name="Science">
        <title>Genomic islands and the ecology and evolution of Prochlorococcus.</title>
        <authorList>
            <person name="Coleman M.L."/>
            <person name="Sullivan M.B."/>
            <person name="Martiny A.C."/>
            <person name="Steglich C."/>
            <person name="Barry K."/>
            <person name="Delong E.F."/>
            <person name="Chisholm S.W."/>
        </authorList>
    </citation>
    <scope>NUCLEOTIDE SEQUENCE [LARGE SCALE GENOMIC DNA]</scope>
    <source>
        <strain>MIT 9312</strain>
    </source>
</reference>
<protein>
    <recommendedName>
        <fullName evidence="1">Large ribosomal subunit protein bL28</fullName>
    </recommendedName>
    <alternativeName>
        <fullName evidence="2">50S ribosomal protein L28</fullName>
    </alternativeName>
</protein>
<accession>Q31AY7</accession>
<organism>
    <name type="scientific">Prochlorococcus marinus (strain MIT 9312)</name>
    <dbReference type="NCBI Taxonomy" id="74546"/>
    <lineage>
        <taxon>Bacteria</taxon>
        <taxon>Bacillati</taxon>
        <taxon>Cyanobacteriota</taxon>
        <taxon>Cyanophyceae</taxon>
        <taxon>Synechococcales</taxon>
        <taxon>Prochlorococcaceae</taxon>
        <taxon>Prochlorococcus</taxon>
    </lineage>
</organism>
<name>RL28_PROM9</name>